<accession>Q08BL9</accession>
<accession>A0A8M1NA83</accession>
<gene>
    <name evidence="7" type="primary">klhl24a</name>
</gene>
<name>KL24A_DANRE</name>
<protein>
    <recommendedName>
        <fullName evidence="6">Kelch-like protein 24a</fullName>
    </recommendedName>
    <alternativeName>
        <fullName evidence="7">Kelch-like family member 24a</fullName>
    </alternativeName>
</protein>
<feature type="chain" id="PRO_0000458261" description="Kelch-like protein 24a">
    <location>
        <begin position="1"/>
        <end position="599"/>
    </location>
</feature>
<feature type="domain" description="BTB" evidence="4">
    <location>
        <begin position="65"/>
        <end position="132"/>
    </location>
</feature>
<feature type="domain" description="BACK" evidence="3">
    <location>
        <begin position="167"/>
        <end position="269"/>
    </location>
</feature>
<feature type="repeat" description="Kelch 1" evidence="3">
    <location>
        <begin position="313"/>
        <end position="362"/>
    </location>
</feature>
<feature type="repeat" description="Kelch 2" evidence="3">
    <location>
        <begin position="364"/>
        <end position="406"/>
    </location>
</feature>
<feature type="repeat" description="Kelch 3" evidence="3">
    <location>
        <begin position="407"/>
        <end position="453"/>
    </location>
</feature>
<feature type="repeat" description="Kelch 4" evidence="3">
    <location>
        <begin position="455"/>
        <end position="501"/>
    </location>
</feature>
<feature type="repeat" description="Kelch 5" evidence="3">
    <location>
        <begin position="503"/>
        <end position="543"/>
    </location>
</feature>
<feature type="repeat" description="Kelch 6" evidence="3">
    <location>
        <begin position="545"/>
        <end position="591"/>
    </location>
</feature>
<organism>
    <name type="scientific">Danio rerio</name>
    <name type="common">Zebrafish</name>
    <name type="synonym">Brachydanio rerio</name>
    <dbReference type="NCBI Taxonomy" id="7955"/>
    <lineage>
        <taxon>Eukaryota</taxon>
        <taxon>Metazoa</taxon>
        <taxon>Chordata</taxon>
        <taxon>Craniata</taxon>
        <taxon>Vertebrata</taxon>
        <taxon>Euteleostomi</taxon>
        <taxon>Actinopterygii</taxon>
        <taxon>Neopterygii</taxon>
        <taxon>Teleostei</taxon>
        <taxon>Ostariophysi</taxon>
        <taxon>Cypriniformes</taxon>
        <taxon>Danionidae</taxon>
        <taxon>Danioninae</taxon>
        <taxon>Danio</taxon>
    </lineage>
</organism>
<dbReference type="EMBL" id="BX323035">
    <property type="status" value="NOT_ANNOTATED_CDS"/>
    <property type="molecule type" value="Genomic_DNA"/>
</dbReference>
<dbReference type="EMBL" id="CU927915">
    <property type="status" value="NOT_ANNOTATED_CDS"/>
    <property type="molecule type" value="Genomic_DNA"/>
</dbReference>
<dbReference type="EMBL" id="BC124660">
    <property type="protein sequence ID" value="AAI24661.1"/>
    <property type="molecule type" value="mRNA"/>
</dbReference>
<dbReference type="RefSeq" id="NP_001070808.1">
    <property type="nucleotide sequence ID" value="NM_001077340.1"/>
</dbReference>
<dbReference type="SMR" id="Q08BL9"/>
<dbReference type="STRING" id="7955.ENSDARP00000088904"/>
<dbReference type="PaxDb" id="7955-ENSDARP00000088904"/>
<dbReference type="Ensembl" id="ENSDART00000098132">
    <property type="protein sequence ID" value="ENSDARP00000088904"/>
    <property type="gene ID" value="ENSDARG00000021739"/>
</dbReference>
<dbReference type="GeneID" id="768198"/>
<dbReference type="KEGG" id="dre:768198"/>
<dbReference type="AGR" id="ZFIN:ZDB-GENE-061013-572"/>
<dbReference type="CTD" id="768198"/>
<dbReference type="ZFIN" id="ZDB-GENE-061013-572">
    <property type="gene designation" value="klhl24a"/>
</dbReference>
<dbReference type="eggNOG" id="KOG4441">
    <property type="taxonomic scope" value="Eukaryota"/>
</dbReference>
<dbReference type="HOGENOM" id="CLU_004253_14_2_1"/>
<dbReference type="InParanoid" id="Q08BL9"/>
<dbReference type="OMA" id="CITIHRF"/>
<dbReference type="OrthoDB" id="19132at2759"/>
<dbReference type="TreeFam" id="TF351654"/>
<dbReference type="PRO" id="PR:Q08BL9"/>
<dbReference type="Proteomes" id="UP000000437">
    <property type="component" value="Alternate scaffold 2"/>
</dbReference>
<dbReference type="Proteomes" id="UP000000437">
    <property type="component" value="Chromosome 2"/>
</dbReference>
<dbReference type="Bgee" id="ENSDARG00000021739">
    <property type="expression patterns" value="Expressed in heart and 20 other cell types or tissues"/>
</dbReference>
<dbReference type="GO" id="GO:0005912">
    <property type="term" value="C:adherens junction"/>
    <property type="evidence" value="ECO:0007669"/>
    <property type="project" value="UniProtKB-SubCell"/>
</dbReference>
<dbReference type="GO" id="GO:0030424">
    <property type="term" value="C:axon"/>
    <property type="evidence" value="ECO:0007669"/>
    <property type="project" value="UniProtKB-SubCell"/>
</dbReference>
<dbReference type="GO" id="GO:0031463">
    <property type="term" value="C:Cul3-RING ubiquitin ligase complex"/>
    <property type="evidence" value="ECO:0000318"/>
    <property type="project" value="GO_Central"/>
</dbReference>
<dbReference type="GO" id="GO:0005737">
    <property type="term" value="C:cytoplasm"/>
    <property type="evidence" value="ECO:0000318"/>
    <property type="project" value="GO_Central"/>
</dbReference>
<dbReference type="GO" id="GO:0030057">
    <property type="term" value="C:desmosome"/>
    <property type="evidence" value="ECO:0007669"/>
    <property type="project" value="UniProtKB-SubCell"/>
</dbReference>
<dbReference type="GO" id="GO:0043204">
    <property type="term" value="C:perikaryon"/>
    <property type="evidence" value="ECO:0007669"/>
    <property type="project" value="UniProtKB-SubCell"/>
</dbReference>
<dbReference type="GO" id="GO:1990756">
    <property type="term" value="F:ubiquitin-like ligase-substrate adaptor activity"/>
    <property type="evidence" value="ECO:0000318"/>
    <property type="project" value="GO_Central"/>
</dbReference>
<dbReference type="GO" id="GO:0007507">
    <property type="term" value="P:heart development"/>
    <property type="evidence" value="ECO:0000315"/>
    <property type="project" value="ZFIN"/>
</dbReference>
<dbReference type="GO" id="GO:0043161">
    <property type="term" value="P:proteasome-mediated ubiquitin-dependent protein catabolic process"/>
    <property type="evidence" value="ECO:0000318"/>
    <property type="project" value="GO_Central"/>
</dbReference>
<dbReference type="CDD" id="cd18463">
    <property type="entry name" value="BACK_KLHL24"/>
    <property type="match status" value="1"/>
</dbReference>
<dbReference type="CDD" id="cd18253">
    <property type="entry name" value="BTB_POZ_KLHL24_KRIP6"/>
    <property type="match status" value="1"/>
</dbReference>
<dbReference type="FunFam" id="1.25.40.420:FF:000001">
    <property type="entry name" value="Kelch-like family member 12"/>
    <property type="match status" value="1"/>
</dbReference>
<dbReference type="Gene3D" id="1.25.40.420">
    <property type="match status" value="1"/>
</dbReference>
<dbReference type="Gene3D" id="2.120.10.80">
    <property type="entry name" value="Kelch-type beta propeller"/>
    <property type="match status" value="1"/>
</dbReference>
<dbReference type="Gene3D" id="3.30.710.10">
    <property type="entry name" value="Potassium Channel Kv1.1, Chain A"/>
    <property type="match status" value="1"/>
</dbReference>
<dbReference type="InterPro" id="IPR011705">
    <property type="entry name" value="BACK"/>
</dbReference>
<dbReference type="InterPro" id="IPR017096">
    <property type="entry name" value="BTB-kelch_protein"/>
</dbReference>
<dbReference type="InterPro" id="IPR000210">
    <property type="entry name" value="BTB/POZ_dom"/>
</dbReference>
<dbReference type="InterPro" id="IPR030596">
    <property type="entry name" value="BTB_POZ_KLHL24"/>
</dbReference>
<dbReference type="InterPro" id="IPR015915">
    <property type="entry name" value="Kelch-typ_b-propeller"/>
</dbReference>
<dbReference type="InterPro" id="IPR006652">
    <property type="entry name" value="Kelch_1"/>
</dbReference>
<dbReference type="InterPro" id="IPR047071">
    <property type="entry name" value="KLHL24_BACK"/>
</dbReference>
<dbReference type="InterPro" id="IPR011333">
    <property type="entry name" value="SKP1/BTB/POZ_sf"/>
</dbReference>
<dbReference type="PANTHER" id="PTHR24412">
    <property type="entry name" value="KELCH PROTEIN"/>
    <property type="match status" value="1"/>
</dbReference>
<dbReference type="PANTHER" id="PTHR24412:SF215">
    <property type="entry name" value="KELCH-LIKE PROTEIN 24"/>
    <property type="match status" value="1"/>
</dbReference>
<dbReference type="Pfam" id="PF07707">
    <property type="entry name" value="BACK"/>
    <property type="match status" value="1"/>
</dbReference>
<dbReference type="Pfam" id="PF00651">
    <property type="entry name" value="BTB"/>
    <property type="match status" value="1"/>
</dbReference>
<dbReference type="Pfam" id="PF13415">
    <property type="entry name" value="Kelch_3"/>
    <property type="match status" value="1"/>
</dbReference>
<dbReference type="Pfam" id="PF24681">
    <property type="entry name" value="Kelch_KLHDC2_KLHL20_DRC7"/>
    <property type="match status" value="1"/>
</dbReference>
<dbReference type="PIRSF" id="PIRSF037037">
    <property type="entry name" value="Kelch-like_protein_gigaxonin"/>
    <property type="match status" value="1"/>
</dbReference>
<dbReference type="SMART" id="SM00875">
    <property type="entry name" value="BACK"/>
    <property type="match status" value="1"/>
</dbReference>
<dbReference type="SMART" id="SM00225">
    <property type="entry name" value="BTB"/>
    <property type="match status" value="1"/>
</dbReference>
<dbReference type="SMART" id="SM00612">
    <property type="entry name" value="Kelch"/>
    <property type="match status" value="6"/>
</dbReference>
<dbReference type="SUPFAM" id="SSF117281">
    <property type="entry name" value="Kelch motif"/>
    <property type="match status" value="1"/>
</dbReference>
<dbReference type="SUPFAM" id="SSF54695">
    <property type="entry name" value="POZ domain"/>
    <property type="match status" value="1"/>
</dbReference>
<dbReference type="PROSITE" id="PS50097">
    <property type="entry name" value="BTB"/>
    <property type="match status" value="1"/>
</dbReference>
<evidence type="ECO:0000250" key="1">
    <source>
        <dbReference type="UniProtKB" id="Q56A24"/>
    </source>
</evidence>
<evidence type="ECO:0000250" key="2">
    <source>
        <dbReference type="UniProtKB" id="Q6TFL4"/>
    </source>
</evidence>
<evidence type="ECO:0000255" key="3"/>
<evidence type="ECO:0000255" key="4">
    <source>
        <dbReference type="PROSITE-ProRule" id="PRU00037"/>
    </source>
</evidence>
<evidence type="ECO:0000269" key="5">
    <source>
    </source>
</evidence>
<evidence type="ECO:0000305" key="6"/>
<evidence type="ECO:0000312" key="7">
    <source>
        <dbReference type="ZFIN" id="ZDB-GENE-061013-572"/>
    </source>
</evidence>
<proteinExistence type="evidence at transcript level"/>
<comment type="function">
    <text evidence="1 2 5">Necessary to maintain the balance between intermediate filament stability and degradation, a process that is essential for skin integrity (By similarity). Reduces kainate receptor-mediated currents in brain neurons, most probably by modulating channel properties (By similarity). It is required for proper heart development (PubMed:30715372).</text>
</comment>
<comment type="subunit">
    <text evidence="2">Forms homodimers (By similarity). Component of the BCR(KLHL24) E3 ubiquitin ligase complex (By similarity).</text>
</comment>
<comment type="subcellular location">
    <subcellularLocation>
        <location evidence="2">Perikaryon</location>
    </subcellularLocation>
    <subcellularLocation>
        <location evidence="1">Cell projection</location>
        <location evidence="1">Axon</location>
    </subcellularLocation>
    <subcellularLocation>
        <location evidence="1 2">Cytoplasm</location>
    </subcellularLocation>
    <subcellularLocation>
        <location evidence="2">Cell junction</location>
        <location evidence="2">Desmosome</location>
    </subcellularLocation>
    <subcellularLocation>
        <location evidence="2">Cell junction</location>
        <location evidence="2">Adherens junction</location>
    </subcellularLocation>
</comment>
<comment type="developmental stage">
    <text evidence="5">Expressed in the cardiac cone, especially in the central region harbouring ventricular myocytes by 22 hours post-fertilization (hpf). At 72 hpf, when the heart is an S-shaped loop, klhl24a transcripts are detected in the ventricle and at a lower level in the atrium.</text>
</comment>
<comment type="disruption phenotype">
    <text evidence="5">Morpholino-injected embryos show heart function anomalies detectable after 48 hpf. Heart defects initially manifest as pericardial edema, changed heart rate and reduced blood circulation, and later result in ventricular failure and blood circulation block.</text>
</comment>
<keyword id="KW-0965">Cell junction</keyword>
<keyword id="KW-0966">Cell projection</keyword>
<keyword id="KW-0963">Cytoplasm</keyword>
<keyword id="KW-0880">Kelch repeat</keyword>
<keyword id="KW-1185">Reference proteome</keyword>
<keyword id="KW-0677">Repeat</keyword>
<keyword id="KW-0833">Ubl conjugation pathway</keyword>
<sequence length="599" mass="67865">MVLILGRRLNHENSGGVPESPAIKRKVFEMETKTLSDVFNFSSGSSHSESVLQVFNEFRDSRLFTDVIISVQGREFPCHRAVLSACSSYFRAMFCNDHRESREMVVEINGIQADAMDTFLQYVYTGRACITTLNVQFLFETSSLFQITTLRDACAKFLEEQLDPCNCLGIQRFADAHSLKQLASRCRTFALLNFPEVAQHEEFQDLRKDELEEYLASDELSICREEVVFEAVMRWVYHGVEYRRPMLKDLLQHVRLPLLHPNYFVQTVEGDKLIQNAPECYQLLHEARRYHVLGNEMMSPRTRPRRSTGFSEVIVVVGGCERMGGFNLPYTECYDPVTGEWTSLAKHPEYTKSEYAVCALRNDIILSGGRINSSYVWMYNSQLNVWIRVASLNKGRWRHKMTVLLGKVYAVGGYDGQCYLNNVEVYDSFSNRWTEVAPLKEAVCSPAVTSCAGKLFVIGGEPDENSCSNKVQCYDPESDSWQLKACLPFTKPNISAVSLNHLIYVCGGLTKSIYCYDPSQDHWMHVGHTFSRQESCGVSVCNGKIYILGGRGENGEASNNVVCYDPSSGIITSTAAMPRPVSYHGCVTVHRFSEKQHKP</sequence>
<reference key="1">
    <citation type="journal article" date="2013" name="Nature">
        <title>The zebrafish reference genome sequence and its relationship to the human genome.</title>
        <authorList>
            <person name="Howe K."/>
            <person name="Clark M.D."/>
            <person name="Torroja C.F."/>
            <person name="Torrance J."/>
            <person name="Berthelot C."/>
            <person name="Muffato M."/>
            <person name="Collins J.E."/>
            <person name="Humphray S."/>
            <person name="McLaren K."/>
            <person name="Matthews L."/>
            <person name="McLaren S."/>
            <person name="Sealy I."/>
            <person name="Caccamo M."/>
            <person name="Churcher C."/>
            <person name="Scott C."/>
            <person name="Barrett J.C."/>
            <person name="Koch R."/>
            <person name="Rauch G.J."/>
            <person name="White S."/>
            <person name="Chow W."/>
            <person name="Kilian B."/>
            <person name="Quintais L.T."/>
            <person name="Guerra-Assuncao J.A."/>
            <person name="Zhou Y."/>
            <person name="Gu Y."/>
            <person name="Yen J."/>
            <person name="Vogel J.H."/>
            <person name="Eyre T."/>
            <person name="Redmond S."/>
            <person name="Banerjee R."/>
            <person name="Chi J."/>
            <person name="Fu B."/>
            <person name="Langley E."/>
            <person name="Maguire S.F."/>
            <person name="Laird G.K."/>
            <person name="Lloyd D."/>
            <person name="Kenyon E."/>
            <person name="Donaldson S."/>
            <person name="Sehra H."/>
            <person name="Almeida-King J."/>
            <person name="Loveland J."/>
            <person name="Trevanion S."/>
            <person name="Jones M."/>
            <person name="Quail M."/>
            <person name="Willey D."/>
            <person name="Hunt A."/>
            <person name="Burton J."/>
            <person name="Sims S."/>
            <person name="McLay K."/>
            <person name="Plumb B."/>
            <person name="Davis J."/>
            <person name="Clee C."/>
            <person name="Oliver K."/>
            <person name="Clark R."/>
            <person name="Riddle C."/>
            <person name="Elliot D."/>
            <person name="Threadgold G."/>
            <person name="Harden G."/>
            <person name="Ware D."/>
            <person name="Begum S."/>
            <person name="Mortimore B."/>
            <person name="Kerry G."/>
            <person name="Heath P."/>
            <person name="Phillimore B."/>
            <person name="Tracey A."/>
            <person name="Corby N."/>
            <person name="Dunn M."/>
            <person name="Johnson C."/>
            <person name="Wood J."/>
            <person name="Clark S."/>
            <person name="Pelan S."/>
            <person name="Griffiths G."/>
            <person name="Smith M."/>
            <person name="Glithero R."/>
            <person name="Howden P."/>
            <person name="Barker N."/>
            <person name="Lloyd C."/>
            <person name="Stevens C."/>
            <person name="Harley J."/>
            <person name="Holt K."/>
            <person name="Panagiotidis G."/>
            <person name="Lovell J."/>
            <person name="Beasley H."/>
            <person name="Henderson C."/>
            <person name="Gordon D."/>
            <person name="Auger K."/>
            <person name="Wright D."/>
            <person name="Collins J."/>
            <person name="Raisen C."/>
            <person name="Dyer L."/>
            <person name="Leung K."/>
            <person name="Robertson L."/>
            <person name="Ambridge K."/>
            <person name="Leongamornlert D."/>
            <person name="McGuire S."/>
            <person name="Gilderthorp R."/>
            <person name="Griffiths C."/>
            <person name="Manthravadi D."/>
            <person name="Nichol S."/>
            <person name="Barker G."/>
            <person name="Whitehead S."/>
            <person name="Kay M."/>
            <person name="Brown J."/>
            <person name="Murnane C."/>
            <person name="Gray E."/>
            <person name="Humphries M."/>
            <person name="Sycamore N."/>
            <person name="Barker D."/>
            <person name="Saunders D."/>
            <person name="Wallis J."/>
            <person name="Babbage A."/>
            <person name="Hammond S."/>
            <person name="Mashreghi-Mohammadi M."/>
            <person name="Barr L."/>
            <person name="Martin S."/>
            <person name="Wray P."/>
            <person name="Ellington A."/>
            <person name="Matthews N."/>
            <person name="Ellwood M."/>
            <person name="Woodmansey R."/>
            <person name="Clark G."/>
            <person name="Cooper J."/>
            <person name="Tromans A."/>
            <person name="Grafham D."/>
            <person name="Skuce C."/>
            <person name="Pandian R."/>
            <person name="Andrews R."/>
            <person name="Harrison E."/>
            <person name="Kimberley A."/>
            <person name="Garnett J."/>
            <person name="Fosker N."/>
            <person name="Hall R."/>
            <person name="Garner P."/>
            <person name="Kelly D."/>
            <person name="Bird C."/>
            <person name="Palmer S."/>
            <person name="Gehring I."/>
            <person name="Berger A."/>
            <person name="Dooley C.M."/>
            <person name="Ersan-Urun Z."/>
            <person name="Eser C."/>
            <person name="Geiger H."/>
            <person name="Geisler M."/>
            <person name="Karotki L."/>
            <person name="Kirn A."/>
            <person name="Konantz J."/>
            <person name="Konantz M."/>
            <person name="Oberlander M."/>
            <person name="Rudolph-Geiger S."/>
            <person name="Teucke M."/>
            <person name="Lanz C."/>
            <person name="Raddatz G."/>
            <person name="Osoegawa K."/>
            <person name="Zhu B."/>
            <person name="Rapp A."/>
            <person name="Widaa S."/>
            <person name="Langford C."/>
            <person name="Yang F."/>
            <person name="Schuster S.C."/>
            <person name="Carter N.P."/>
            <person name="Harrow J."/>
            <person name="Ning Z."/>
            <person name="Herrero J."/>
            <person name="Searle S.M."/>
            <person name="Enright A."/>
            <person name="Geisler R."/>
            <person name="Plasterk R.H."/>
            <person name="Lee C."/>
            <person name="Westerfield M."/>
            <person name="de Jong P.J."/>
            <person name="Zon L.I."/>
            <person name="Postlethwait J.H."/>
            <person name="Nusslein-Volhard C."/>
            <person name="Hubbard T.J."/>
            <person name="Roest Crollius H."/>
            <person name="Rogers J."/>
            <person name="Stemple D.L."/>
        </authorList>
    </citation>
    <scope>NUCLEOTIDE SEQUENCE [LARGE SCALE GENOMIC DNA]</scope>
    <source>
        <strain>Tuebingen</strain>
    </source>
</reference>
<reference key="2">
    <citation type="submission" date="2006-10" db="EMBL/GenBank/DDBJ databases">
        <authorList>
            <consortium name="NIH - Zebrafish Gene Collection (ZGC) project"/>
        </authorList>
    </citation>
    <scope>NUCLEOTIDE SEQUENCE [LARGE SCALE MRNA]</scope>
    <source>
        <tissue>Ovary</tissue>
    </source>
</reference>
<reference key="3">
    <citation type="journal article" date="2019" name="Hum. Mol. Genet.">
        <title>Cardiomyopathy with lethal arrhythmias associated with inactivation of KLHL24.</title>
        <authorList>
            <person name="Hedberg-Oldfors C."/>
            <person name="Abramsson A."/>
            <person name="Osborn D.P.S."/>
            <person name="Danielsson O."/>
            <person name="Fazlinezhad A."/>
            <person name="Nilipour Y."/>
            <person name="Huebbert L."/>
            <person name="Nennesmo I."/>
            <person name="Visuttijai K."/>
            <person name="Bharj J."/>
            <person name="Petropoulou E."/>
            <person name="Shoreim A."/>
            <person name="Vona B."/>
            <person name="Ahangari N."/>
            <person name="Lopez M.D."/>
            <person name="Doosti M."/>
            <person name="Banote R.K."/>
            <person name="Maroofian R."/>
            <person name="Edling M."/>
            <person name="Taherpour M."/>
            <person name="Zetterberg H."/>
            <person name="Karimiani E.G."/>
            <person name="Oldfors A."/>
            <person name="Jamshidi Y."/>
        </authorList>
    </citation>
    <scope>DISRUPTION PHENOTYPE</scope>
    <scope>FUNCTION</scope>
    <scope>DEVELOPMENTAL STAGE</scope>
</reference>